<evidence type="ECO:0000255" key="1">
    <source>
        <dbReference type="HAMAP-Rule" id="MF_00713"/>
    </source>
</evidence>
<dbReference type="EC" id="1.4.4.2" evidence="1"/>
<dbReference type="EMBL" id="CP001634">
    <property type="protein sequence ID" value="ACR80309.1"/>
    <property type="molecule type" value="Genomic_DNA"/>
</dbReference>
<dbReference type="RefSeq" id="WP_015868954.1">
    <property type="nucleotide sequence ID" value="NC_012785.1"/>
</dbReference>
<dbReference type="SMR" id="C5CF44"/>
<dbReference type="STRING" id="521045.Kole_1619"/>
<dbReference type="KEGG" id="kol:Kole_1619"/>
<dbReference type="eggNOG" id="COG1003">
    <property type="taxonomic scope" value="Bacteria"/>
</dbReference>
<dbReference type="HOGENOM" id="CLU_004620_5_0_0"/>
<dbReference type="OrthoDB" id="9801272at2"/>
<dbReference type="Proteomes" id="UP000002382">
    <property type="component" value="Chromosome"/>
</dbReference>
<dbReference type="GO" id="GO:0005829">
    <property type="term" value="C:cytosol"/>
    <property type="evidence" value="ECO:0007669"/>
    <property type="project" value="TreeGrafter"/>
</dbReference>
<dbReference type="GO" id="GO:0005960">
    <property type="term" value="C:glycine cleavage complex"/>
    <property type="evidence" value="ECO:0007669"/>
    <property type="project" value="TreeGrafter"/>
</dbReference>
<dbReference type="GO" id="GO:0016594">
    <property type="term" value="F:glycine binding"/>
    <property type="evidence" value="ECO:0007669"/>
    <property type="project" value="TreeGrafter"/>
</dbReference>
<dbReference type="GO" id="GO:0004375">
    <property type="term" value="F:glycine dehydrogenase (decarboxylating) activity"/>
    <property type="evidence" value="ECO:0007669"/>
    <property type="project" value="UniProtKB-EC"/>
</dbReference>
<dbReference type="GO" id="GO:0030170">
    <property type="term" value="F:pyridoxal phosphate binding"/>
    <property type="evidence" value="ECO:0007669"/>
    <property type="project" value="TreeGrafter"/>
</dbReference>
<dbReference type="GO" id="GO:0019464">
    <property type="term" value="P:glycine decarboxylation via glycine cleavage system"/>
    <property type="evidence" value="ECO:0007669"/>
    <property type="project" value="UniProtKB-UniRule"/>
</dbReference>
<dbReference type="CDD" id="cd00613">
    <property type="entry name" value="GDC-P"/>
    <property type="match status" value="1"/>
</dbReference>
<dbReference type="FunFam" id="3.40.640.10:FF:000034">
    <property type="entry name" value="Probable glycine dehydrogenase (decarboxylating) subunit 2"/>
    <property type="match status" value="1"/>
</dbReference>
<dbReference type="FunFam" id="3.90.1150.10:FF:000014">
    <property type="entry name" value="Probable glycine dehydrogenase (decarboxylating) subunit 2"/>
    <property type="match status" value="1"/>
</dbReference>
<dbReference type="Gene3D" id="6.20.440.10">
    <property type="match status" value="1"/>
</dbReference>
<dbReference type="Gene3D" id="3.90.1150.10">
    <property type="entry name" value="Aspartate Aminotransferase, domain 1"/>
    <property type="match status" value="1"/>
</dbReference>
<dbReference type="Gene3D" id="3.40.640.10">
    <property type="entry name" value="Type I PLP-dependent aspartate aminotransferase-like (Major domain)"/>
    <property type="match status" value="1"/>
</dbReference>
<dbReference type="HAMAP" id="MF_00713">
    <property type="entry name" value="GcvPB"/>
    <property type="match status" value="1"/>
</dbReference>
<dbReference type="InterPro" id="IPR023012">
    <property type="entry name" value="GcvPB"/>
</dbReference>
<dbReference type="InterPro" id="IPR049316">
    <property type="entry name" value="GDC-P_C"/>
</dbReference>
<dbReference type="InterPro" id="IPR049315">
    <property type="entry name" value="GDC-P_N"/>
</dbReference>
<dbReference type="InterPro" id="IPR020581">
    <property type="entry name" value="GDC_P"/>
</dbReference>
<dbReference type="InterPro" id="IPR015424">
    <property type="entry name" value="PyrdxlP-dep_Trfase"/>
</dbReference>
<dbReference type="InterPro" id="IPR015421">
    <property type="entry name" value="PyrdxlP-dep_Trfase_major"/>
</dbReference>
<dbReference type="InterPro" id="IPR015422">
    <property type="entry name" value="PyrdxlP-dep_Trfase_small"/>
</dbReference>
<dbReference type="NCBIfam" id="NF003346">
    <property type="entry name" value="PRK04366.1"/>
    <property type="match status" value="1"/>
</dbReference>
<dbReference type="PANTHER" id="PTHR11773:SF1">
    <property type="entry name" value="GLYCINE DEHYDROGENASE (DECARBOXYLATING), MITOCHONDRIAL"/>
    <property type="match status" value="1"/>
</dbReference>
<dbReference type="PANTHER" id="PTHR11773">
    <property type="entry name" value="GLYCINE DEHYDROGENASE, DECARBOXYLATING"/>
    <property type="match status" value="1"/>
</dbReference>
<dbReference type="Pfam" id="PF21478">
    <property type="entry name" value="GcvP2_C"/>
    <property type="match status" value="1"/>
</dbReference>
<dbReference type="Pfam" id="PF02347">
    <property type="entry name" value="GDC-P"/>
    <property type="match status" value="1"/>
</dbReference>
<dbReference type="SUPFAM" id="SSF53383">
    <property type="entry name" value="PLP-dependent transferases"/>
    <property type="match status" value="1"/>
</dbReference>
<keyword id="KW-0560">Oxidoreductase</keyword>
<keyword id="KW-0663">Pyridoxal phosphate</keyword>
<keyword id="KW-1185">Reference proteome</keyword>
<protein>
    <recommendedName>
        <fullName evidence="1">Probable glycine dehydrogenase (decarboxylating) subunit 2</fullName>
        <ecNumber evidence="1">1.4.4.2</ecNumber>
    </recommendedName>
    <alternativeName>
        <fullName evidence="1">Glycine cleavage system P-protein subunit 2</fullName>
    </alternativeName>
    <alternativeName>
        <fullName evidence="1">Glycine decarboxylase subunit 2</fullName>
    </alternativeName>
    <alternativeName>
        <fullName evidence="1">Glycine dehydrogenase (aminomethyl-transferring) subunit 2</fullName>
    </alternativeName>
</protein>
<gene>
    <name evidence="1" type="primary">gcvPB</name>
    <name type="ordered locus">Kole_1619</name>
</gene>
<organism>
    <name type="scientific">Kosmotoga olearia (strain ATCC BAA-1733 / DSM 21960 / TBF 19.5.1)</name>
    <dbReference type="NCBI Taxonomy" id="521045"/>
    <lineage>
        <taxon>Bacteria</taxon>
        <taxon>Thermotogati</taxon>
        <taxon>Thermotogota</taxon>
        <taxon>Thermotogae</taxon>
        <taxon>Kosmotogales</taxon>
        <taxon>Kosmotogaceae</taxon>
        <taxon>Kosmotoga</taxon>
    </lineage>
</organism>
<proteinExistence type="inferred from homology"/>
<accession>C5CF44</accession>
<name>GCSPB_KOSOT</name>
<comment type="function">
    <text evidence="1">The glycine cleavage system catalyzes the degradation of glycine. The P protein binds the alpha-amino group of glycine through its pyridoxal phosphate cofactor; CO(2) is released and the remaining methylamine moiety is then transferred to the lipoamide cofactor of the H protein.</text>
</comment>
<comment type="catalytic activity">
    <reaction evidence="1">
        <text>N(6)-[(R)-lipoyl]-L-lysyl-[glycine-cleavage complex H protein] + glycine + H(+) = N(6)-[(R)-S(8)-aminomethyldihydrolipoyl]-L-lysyl-[glycine-cleavage complex H protein] + CO2</text>
        <dbReference type="Rhea" id="RHEA:24304"/>
        <dbReference type="Rhea" id="RHEA-COMP:10494"/>
        <dbReference type="Rhea" id="RHEA-COMP:10495"/>
        <dbReference type="ChEBI" id="CHEBI:15378"/>
        <dbReference type="ChEBI" id="CHEBI:16526"/>
        <dbReference type="ChEBI" id="CHEBI:57305"/>
        <dbReference type="ChEBI" id="CHEBI:83099"/>
        <dbReference type="ChEBI" id="CHEBI:83143"/>
        <dbReference type="EC" id="1.4.4.2"/>
    </reaction>
</comment>
<comment type="cofactor">
    <cofactor evidence="1">
        <name>pyridoxal 5'-phosphate</name>
        <dbReference type="ChEBI" id="CHEBI:597326"/>
    </cofactor>
</comment>
<comment type="subunit">
    <text evidence="1">The glycine cleavage system is composed of four proteins: P, T, L and H. In this organism, the P 'protein' is a heterodimer of two subunits.</text>
</comment>
<comment type="similarity">
    <text evidence="1">Belongs to the GcvP family. C-terminal subunit subfamily.</text>
</comment>
<sequence length="483" mass="53757">MTIFEKSVTGRTGYTLPEEKKDEIRPSDYIPEHLLRKELPGLPECSEIDVVRHYTELTRKNYSVDNGFYPLGSCTMKYNPKLNEKIAALEGFSLLHPYEPIEKVQGALEVMYRLQTLLSEITGMDAFTLQPAAGAHGELTGMLIVKKYFEVKGENQRTKVIVPDSAHGTNPASASMAGFQVVEIKSNDNGIIDLDNLEAALDESVAAIMLTNPNTLGLFEKDIIKIAEMAHKNGTLLYYDGANLNAIMGKVRPGDMGFDIVHLNLHKTFSTPHGMGGPGSGPVGVKGHLKEFLPIPVVDLTDEGYILKTDLSHSIGRIRSFYGNFGVVVKALAYILMLGKDGLTYASEIAVLNANYLRTRLSELIPTAYPGLCKHEFVLDGTKLVKEYGIKTLDLAKRMLDYGVHPPTIYFPLIVHEALMIEPTETENKDNLDHFVEVVKKILEEAKKDPEFVKNAPYNTPIKRLDEVTASRKPKVRWIPKEQ</sequence>
<reference key="1">
    <citation type="submission" date="2009-06" db="EMBL/GenBank/DDBJ databases">
        <title>Complete sequence of Thermotogales bacterium TBF 19.5.1.</title>
        <authorList>
            <consortium name="US DOE Joint Genome Institute"/>
            <person name="Lucas S."/>
            <person name="Copeland A."/>
            <person name="Lapidus A."/>
            <person name="Glavina del Rio T."/>
            <person name="Tice H."/>
            <person name="Bruce D."/>
            <person name="Goodwin L."/>
            <person name="Pitluck S."/>
            <person name="Chertkov O."/>
            <person name="Brettin T."/>
            <person name="Detter J.C."/>
            <person name="Han C."/>
            <person name="Schmutz J."/>
            <person name="Larimer F."/>
            <person name="Land M."/>
            <person name="Hauser L."/>
            <person name="Kyrpides N."/>
            <person name="Ovchinnikova G."/>
            <person name="Noll K."/>
        </authorList>
    </citation>
    <scope>NUCLEOTIDE SEQUENCE [LARGE SCALE GENOMIC DNA]</scope>
    <source>
        <strain>ATCC BAA-1733 / DSM 21960 / TBF 19.5.1</strain>
    </source>
</reference>
<feature type="chain" id="PRO_1000212671" description="Probable glycine dehydrogenase (decarboxylating) subunit 2">
    <location>
        <begin position="1"/>
        <end position="483"/>
    </location>
</feature>
<feature type="modified residue" description="N6-(pyridoxal phosphate)lysine" evidence="1">
    <location>
        <position position="267"/>
    </location>
</feature>